<protein>
    <recommendedName>
        <fullName evidence="1">Probable malate:quinone oxidoreductase</fullName>
        <ecNumber evidence="1">1.1.5.4</ecNumber>
    </recommendedName>
    <alternativeName>
        <fullName evidence="1">MQO</fullName>
    </alternativeName>
    <alternativeName>
        <fullName evidence="1">Malate dehydrogenase [quinone]</fullName>
    </alternativeName>
</protein>
<proteinExistence type="inferred from homology"/>
<organism>
    <name type="scientific">Escherichia coli O6:K15:H31 (strain 536 / UPEC)</name>
    <dbReference type="NCBI Taxonomy" id="362663"/>
    <lineage>
        <taxon>Bacteria</taxon>
        <taxon>Pseudomonadati</taxon>
        <taxon>Pseudomonadota</taxon>
        <taxon>Gammaproteobacteria</taxon>
        <taxon>Enterobacterales</taxon>
        <taxon>Enterobacteriaceae</taxon>
        <taxon>Escherichia</taxon>
    </lineage>
</organism>
<accession>Q0TFN1</accession>
<feature type="chain" id="PRO_0000325496" description="Probable malate:quinone oxidoreductase">
    <location>
        <begin position="1"/>
        <end position="548"/>
    </location>
</feature>
<sequence>MKKVTAMLFSMAVGLNAVSMAAKAKASEEQETDVLLIGGGIMSATLGTYLRELEPEWSMTMVERLEGVAQESSNGWNNAGTGHSALMELNYTPQNADGSISIEKAVAINEAFQISRQFWAHQVERGVLRTPRSFINTVPHMSFVWGEDNVNFLRARYAALQQSSLFRGMRYSEDHAQIKEWAPLVMEGRDPQQKVAATRTEIGTDVNYGEITRQLIASLQKKSNFSLQLSSEVRALKRNDDNSWTVTVADLKNGTAQNIRAKFVFIGAGGAALKLLQESGIPEAKDYAGFPVGGQFLVSENPDVVNHHLAKVYGKASVGAPPMSVPHIDTRVLDGKRVVLFGPFATFSTKFLKNGSLWDLMSSTTTSNVMPMMHVGLDNFDLVKYLVSQVMLSEEDRFEALKEYYPQAKKEDWRLWQAGQRVQIIKRDADKGGVLRLGTEVVSDQQGTIAALLGASPGASTAAPIMLNLLEKVFGDRVSSPQWQATLKAIVPSYGRKLNGDVAATERELQYTSEVLGLKYDKPQAADSTPKPQLKPQLVQKEVADIAL</sequence>
<keyword id="KW-0274">FAD</keyword>
<keyword id="KW-0285">Flavoprotein</keyword>
<keyword id="KW-0560">Oxidoreductase</keyword>
<keyword id="KW-0816">Tricarboxylic acid cycle</keyword>
<evidence type="ECO:0000255" key="1">
    <source>
        <dbReference type="HAMAP-Rule" id="MF_00212"/>
    </source>
</evidence>
<evidence type="ECO:0000305" key="2"/>
<reference key="1">
    <citation type="journal article" date="2006" name="Mol. Microbiol.">
        <title>Role of pathogenicity island-associated integrases in the genome plasticity of uropathogenic Escherichia coli strain 536.</title>
        <authorList>
            <person name="Hochhut B."/>
            <person name="Wilde C."/>
            <person name="Balling G."/>
            <person name="Middendorf B."/>
            <person name="Dobrindt U."/>
            <person name="Brzuszkiewicz E."/>
            <person name="Gottschalk G."/>
            <person name="Carniel E."/>
            <person name="Hacker J."/>
        </authorList>
    </citation>
    <scope>NUCLEOTIDE SEQUENCE [LARGE SCALE GENOMIC DNA]</scope>
    <source>
        <strain>536 / UPEC</strain>
    </source>
</reference>
<gene>
    <name evidence="1" type="primary">mqo</name>
    <name type="ordered locus">ECP_2252</name>
</gene>
<comment type="catalytic activity">
    <reaction evidence="1">
        <text>(S)-malate + a quinone = a quinol + oxaloacetate</text>
        <dbReference type="Rhea" id="RHEA:46012"/>
        <dbReference type="ChEBI" id="CHEBI:15589"/>
        <dbReference type="ChEBI" id="CHEBI:16452"/>
        <dbReference type="ChEBI" id="CHEBI:24646"/>
        <dbReference type="ChEBI" id="CHEBI:132124"/>
        <dbReference type="EC" id="1.1.5.4"/>
    </reaction>
</comment>
<comment type="cofactor">
    <cofactor evidence="1">
        <name>FAD</name>
        <dbReference type="ChEBI" id="CHEBI:57692"/>
    </cofactor>
</comment>
<comment type="pathway">
    <text evidence="1">Carbohydrate metabolism; tricarboxylic acid cycle; oxaloacetate from (S)-malate (quinone route): step 1/1.</text>
</comment>
<comment type="similarity">
    <text evidence="1">Belongs to the MQO family.</text>
</comment>
<comment type="sequence caution" evidence="2">
    <conflict type="erroneous initiation">
        <sequence resource="EMBL-CDS" id="ABG70248"/>
    </conflict>
</comment>
<dbReference type="EC" id="1.1.5.4" evidence="1"/>
<dbReference type="EMBL" id="CP000247">
    <property type="protein sequence ID" value="ABG70248.1"/>
    <property type="status" value="ALT_INIT"/>
    <property type="molecule type" value="Genomic_DNA"/>
</dbReference>
<dbReference type="RefSeq" id="WP_000758049.1">
    <property type="nucleotide sequence ID" value="NC_008253.1"/>
</dbReference>
<dbReference type="SMR" id="Q0TFN1"/>
<dbReference type="KEGG" id="ecp:ECP_2252"/>
<dbReference type="HOGENOM" id="CLU_028151_0_0_6"/>
<dbReference type="UniPathway" id="UPA00223">
    <property type="reaction ID" value="UER01008"/>
</dbReference>
<dbReference type="Proteomes" id="UP000009182">
    <property type="component" value="Chromosome"/>
</dbReference>
<dbReference type="GO" id="GO:0047545">
    <property type="term" value="F:2-hydroxyglutarate dehydrogenase activity"/>
    <property type="evidence" value="ECO:0007669"/>
    <property type="project" value="TreeGrafter"/>
</dbReference>
<dbReference type="GO" id="GO:0008924">
    <property type="term" value="F:L-malate dehydrogenase (quinone) activity"/>
    <property type="evidence" value="ECO:0007669"/>
    <property type="project" value="UniProtKB-UniRule"/>
</dbReference>
<dbReference type="GO" id="GO:0006099">
    <property type="term" value="P:tricarboxylic acid cycle"/>
    <property type="evidence" value="ECO:0007669"/>
    <property type="project" value="UniProtKB-UniRule"/>
</dbReference>
<dbReference type="Gene3D" id="3.30.9.10">
    <property type="entry name" value="D-Amino Acid Oxidase, subunit A, domain 2"/>
    <property type="match status" value="1"/>
</dbReference>
<dbReference type="Gene3D" id="3.50.50.60">
    <property type="entry name" value="FAD/NAD(P)-binding domain"/>
    <property type="match status" value="1"/>
</dbReference>
<dbReference type="HAMAP" id="MF_00212">
    <property type="entry name" value="MQO"/>
    <property type="match status" value="1"/>
</dbReference>
<dbReference type="InterPro" id="IPR036188">
    <property type="entry name" value="FAD/NAD-bd_sf"/>
</dbReference>
<dbReference type="InterPro" id="IPR006231">
    <property type="entry name" value="MQO"/>
</dbReference>
<dbReference type="NCBIfam" id="TIGR01320">
    <property type="entry name" value="mal_quin_oxido"/>
    <property type="match status" value="1"/>
</dbReference>
<dbReference type="NCBIfam" id="NF003603">
    <property type="entry name" value="PRK05257.1-1"/>
    <property type="match status" value="1"/>
</dbReference>
<dbReference type="NCBIfam" id="NF003605">
    <property type="entry name" value="PRK05257.1-4"/>
    <property type="match status" value="1"/>
</dbReference>
<dbReference type="NCBIfam" id="NF003606">
    <property type="entry name" value="PRK05257.2-1"/>
    <property type="match status" value="1"/>
</dbReference>
<dbReference type="NCBIfam" id="NF003608">
    <property type="entry name" value="PRK05257.2-4"/>
    <property type="match status" value="1"/>
</dbReference>
<dbReference type="NCBIfam" id="NF003611">
    <property type="entry name" value="PRK05257.3-2"/>
    <property type="match status" value="1"/>
</dbReference>
<dbReference type="NCBIfam" id="NF009875">
    <property type="entry name" value="PRK13339.1"/>
    <property type="match status" value="1"/>
</dbReference>
<dbReference type="PANTHER" id="PTHR43104">
    <property type="entry name" value="L-2-HYDROXYGLUTARATE DEHYDROGENASE, MITOCHONDRIAL"/>
    <property type="match status" value="1"/>
</dbReference>
<dbReference type="PANTHER" id="PTHR43104:SF2">
    <property type="entry name" value="L-2-HYDROXYGLUTARATE DEHYDROGENASE, MITOCHONDRIAL"/>
    <property type="match status" value="1"/>
</dbReference>
<dbReference type="Pfam" id="PF06039">
    <property type="entry name" value="Mqo"/>
    <property type="match status" value="1"/>
</dbReference>
<dbReference type="SUPFAM" id="SSF51905">
    <property type="entry name" value="FAD/NAD(P)-binding domain"/>
    <property type="match status" value="1"/>
</dbReference>
<name>MQO_ECOL5</name>